<comment type="function">
    <text evidence="1">Copper chaperone for superoxide dismutase 1 (SOD1). Binds copper ions and delivers them specifically to SOD1 (By similarity).</text>
</comment>
<comment type="cofactor">
    <cofactor evidence="1">
        <name>Cu(2+)</name>
        <dbReference type="ChEBI" id="CHEBI:29036"/>
    </cofactor>
    <text evidence="1">Binds 2 copper ions per subunit.</text>
</comment>
<comment type="subcellular location">
    <subcellularLocation>
        <location evidence="1">Cytoplasm</location>
    </subcellularLocation>
</comment>
<comment type="similarity">
    <text evidence="4">Belongs to the CCS1 family.</text>
</comment>
<feature type="chain" id="PRO_0000239063" description="Superoxide dismutase 1 copper chaperone">
    <location>
        <begin position="1"/>
        <end position="245"/>
    </location>
</feature>
<feature type="domain" description="HMA" evidence="3">
    <location>
        <begin position="8"/>
        <end position="71"/>
    </location>
</feature>
<feature type="binding site" evidence="3">
    <location>
        <position position="19"/>
    </location>
    <ligand>
        <name>Cu cation</name>
        <dbReference type="ChEBI" id="CHEBI:23378"/>
        <label>1</label>
    </ligand>
</feature>
<feature type="binding site" evidence="3">
    <location>
        <position position="22"/>
    </location>
    <ligand>
        <name>Cu cation</name>
        <dbReference type="ChEBI" id="CHEBI:23378"/>
        <label>1</label>
    </ligand>
</feature>
<feature type="binding site">
    <location>
        <position position="224"/>
    </location>
    <ligand>
        <name>Cu cation</name>
        <dbReference type="ChEBI" id="CHEBI:23378"/>
        <label>2</label>
    </ligand>
</feature>
<feature type="binding site">
    <location>
        <position position="226"/>
    </location>
    <ligand>
        <name>Cu cation</name>
        <dbReference type="ChEBI" id="CHEBI:23378"/>
        <label>2</label>
    </ligand>
</feature>
<feature type="disulfide bond" evidence="2">
    <location>
        <begin position="29"/>
        <end position="66"/>
    </location>
</feature>
<feature type="disulfide bond" description="Interchain (with C-58 in apo-SOD1)" evidence="2">
    <location>
        <position position="224"/>
    </location>
</feature>
<gene>
    <name type="primary">CCS1</name>
    <name type="ordered locus">KLLA0F26917g</name>
</gene>
<proteinExistence type="inferred from homology"/>
<name>CCS1_KLULA</name>
<accession>Q6CIG2</accession>
<dbReference type="EMBL" id="CR382126">
    <property type="protein sequence ID" value="CAG98985.1"/>
    <property type="molecule type" value="Genomic_DNA"/>
</dbReference>
<dbReference type="RefSeq" id="XP_456277.1">
    <property type="nucleotide sequence ID" value="XM_456277.1"/>
</dbReference>
<dbReference type="SMR" id="Q6CIG2"/>
<dbReference type="FunCoup" id="Q6CIG2">
    <property type="interactions" value="307"/>
</dbReference>
<dbReference type="STRING" id="284590.Q6CIG2"/>
<dbReference type="PaxDb" id="284590-Q6CIG2"/>
<dbReference type="KEGG" id="kla:KLLA0_F26917g"/>
<dbReference type="eggNOG" id="KOG4656">
    <property type="taxonomic scope" value="Eukaryota"/>
</dbReference>
<dbReference type="HOGENOM" id="CLU_056632_0_0_1"/>
<dbReference type="InParanoid" id="Q6CIG2"/>
<dbReference type="OMA" id="KNVWEER"/>
<dbReference type="Proteomes" id="UP000000598">
    <property type="component" value="Chromosome F"/>
</dbReference>
<dbReference type="GO" id="GO:0005737">
    <property type="term" value="C:cytoplasm"/>
    <property type="evidence" value="ECO:0007669"/>
    <property type="project" value="UniProtKB-SubCell"/>
</dbReference>
<dbReference type="GO" id="GO:0005507">
    <property type="term" value="F:copper ion binding"/>
    <property type="evidence" value="ECO:0007669"/>
    <property type="project" value="InterPro"/>
</dbReference>
<dbReference type="GO" id="GO:0006801">
    <property type="term" value="P:superoxide metabolic process"/>
    <property type="evidence" value="ECO:0007669"/>
    <property type="project" value="InterPro"/>
</dbReference>
<dbReference type="CDD" id="cd00371">
    <property type="entry name" value="HMA"/>
    <property type="match status" value="1"/>
</dbReference>
<dbReference type="FunFam" id="3.30.70.100:FF:000038">
    <property type="entry name" value="Superoxide dismutase 1 copper chaperone"/>
    <property type="match status" value="1"/>
</dbReference>
<dbReference type="Gene3D" id="3.30.70.100">
    <property type="match status" value="1"/>
</dbReference>
<dbReference type="Gene3D" id="2.60.40.200">
    <property type="entry name" value="Superoxide dismutase, copper/zinc binding domain"/>
    <property type="match status" value="1"/>
</dbReference>
<dbReference type="InterPro" id="IPR006121">
    <property type="entry name" value="HMA_dom"/>
</dbReference>
<dbReference type="InterPro" id="IPR036163">
    <property type="entry name" value="HMA_dom_sf"/>
</dbReference>
<dbReference type="InterPro" id="IPR036423">
    <property type="entry name" value="SOD-like_Cu/Zn_dom_sf"/>
</dbReference>
<dbReference type="InterPro" id="IPR024134">
    <property type="entry name" value="SOD_Cu/Zn_/chaperone"/>
</dbReference>
<dbReference type="PANTHER" id="PTHR10003">
    <property type="entry name" value="SUPEROXIDE DISMUTASE CU-ZN -RELATED"/>
    <property type="match status" value="1"/>
</dbReference>
<dbReference type="Pfam" id="PF00403">
    <property type="entry name" value="HMA"/>
    <property type="match status" value="1"/>
</dbReference>
<dbReference type="SUPFAM" id="SSF49329">
    <property type="entry name" value="Cu,Zn superoxide dismutase-like"/>
    <property type="match status" value="1"/>
</dbReference>
<dbReference type="SUPFAM" id="SSF55008">
    <property type="entry name" value="HMA, heavy metal-associated domain"/>
    <property type="match status" value="1"/>
</dbReference>
<dbReference type="PROSITE" id="PS50846">
    <property type="entry name" value="HMA_2"/>
    <property type="match status" value="1"/>
</dbReference>
<protein>
    <recommendedName>
        <fullName>Superoxide dismutase 1 copper chaperone</fullName>
    </recommendedName>
</protein>
<sequence length="245" mass="26630">MSGTDENDFEATYAVEMHCESCTNDIQKCLKDVNGIKNVTFDIKDNLMNVEGHAAPSAIINALKNCGRDGIIRGTGKPNSAAVSILGQYTTGPFENTVKGLVRIVEVAQKKTFFDINLNGVEKPGLYYASVRASGDLSEGVKSTGDPIYKFDQPIDCTSPSDSIPNSFSGSSFVSAPVHVWELIGRSFVVTTDPEHNVNKDNDISFGGVIARSAGIWENDKEVCACSGKTLWQERKDAIQHNIRF</sequence>
<evidence type="ECO:0000250" key="1"/>
<evidence type="ECO:0000250" key="2">
    <source>
        <dbReference type="UniProtKB" id="P40202"/>
    </source>
</evidence>
<evidence type="ECO:0000255" key="3">
    <source>
        <dbReference type="PROSITE-ProRule" id="PRU00280"/>
    </source>
</evidence>
<evidence type="ECO:0000305" key="4"/>
<keyword id="KW-0143">Chaperone</keyword>
<keyword id="KW-0186">Copper</keyword>
<keyword id="KW-0963">Cytoplasm</keyword>
<keyword id="KW-1015">Disulfide bond</keyword>
<keyword id="KW-0479">Metal-binding</keyword>
<keyword id="KW-1185">Reference proteome</keyword>
<reference key="1">
    <citation type="journal article" date="2004" name="Nature">
        <title>Genome evolution in yeasts.</title>
        <authorList>
            <person name="Dujon B."/>
            <person name="Sherman D."/>
            <person name="Fischer G."/>
            <person name="Durrens P."/>
            <person name="Casaregola S."/>
            <person name="Lafontaine I."/>
            <person name="de Montigny J."/>
            <person name="Marck C."/>
            <person name="Neuveglise C."/>
            <person name="Talla E."/>
            <person name="Goffard N."/>
            <person name="Frangeul L."/>
            <person name="Aigle M."/>
            <person name="Anthouard V."/>
            <person name="Babour A."/>
            <person name="Barbe V."/>
            <person name="Barnay S."/>
            <person name="Blanchin S."/>
            <person name="Beckerich J.-M."/>
            <person name="Beyne E."/>
            <person name="Bleykasten C."/>
            <person name="Boisrame A."/>
            <person name="Boyer J."/>
            <person name="Cattolico L."/>
            <person name="Confanioleri F."/>
            <person name="de Daruvar A."/>
            <person name="Despons L."/>
            <person name="Fabre E."/>
            <person name="Fairhead C."/>
            <person name="Ferry-Dumazet H."/>
            <person name="Groppi A."/>
            <person name="Hantraye F."/>
            <person name="Hennequin C."/>
            <person name="Jauniaux N."/>
            <person name="Joyet P."/>
            <person name="Kachouri R."/>
            <person name="Kerrest A."/>
            <person name="Koszul R."/>
            <person name="Lemaire M."/>
            <person name="Lesur I."/>
            <person name="Ma L."/>
            <person name="Muller H."/>
            <person name="Nicaud J.-M."/>
            <person name="Nikolski M."/>
            <person name="Oztas S."/>
            <person name="Ozier-Kalogeropoulos O."/>
            <person name="Pellenz S."/>
            <person name="Potier S."/>
            <person name="Richard G.-F."/>
            <person name="Straub M.-L."/>
            <person name="Suleau A."/>
            <person name="Swennen D."/>
            <person name="Tekaia F."/>
            <person name="Wesolowski-Louvel M."/>
            <person name="Westhof E."/>
            <person name="Wirth B."/>
            <person name="Zeniou-Meyer M."/>
            <person name="Zivanovic Y."/>
            <person name="Bolotin-Fukuhara M."/>
            <person name="Thierry A."/>
            <person name="Bouchier C."/>
            <person name="Caudron B."/>
            <person name="Scarpelli C."/>
            <person name="Gaillardin C."/>
            <person name="Weissenbach J."/>
            <person name="Wincker P."/>
            <person name="Souciet J.-L."/>
        </authorList>
    </citation>
    <scope>NUCLEOTIDE SEQUENCE [LARGE SCALE GENOMIC DNA]</scope>
    <source>
        <strain>ATCC 8585 / CBS 2359 / DSM 70799 / NBRC 1267 / NRRL Y-1140 / WM37</strain>
    </source>
</reference>
<organism>
    <name type="scientific">Kluyveromyces lactis (strain ATCC 8585 / CBS 2359 / DSM 70799 / NBRC 1267 / NRRL Y-1140 / WM37)</name>
    <name type="common">Yeast</name>
    <name type="synonym">Candida sphaerica</name>
    <dbReference type="NCBI Taxonomy" id="284590"/>
    <lineage>
        <taxon>Eukaryota</taxon>
        <taxon>Fungi</taxon>
        <taxon>Dikarya</taxon>
        <taxon>Ascomycota</taxon>
        <taxon>Saccharomycotina</taxon>
        <taxon>Saccharomycetes</taxon>
        <taxon>Saccharomycetales</taxon>
        <taxon>Saccharomycetaceae</taxon>
        <taxon>Kluyveromyces</taxon>
    </lineage>
</organism>